<evidence type="ECO:0000250" key="1"/>
<evidence type="ECO:0000255" key="2"/>
<evidence type="ECO:0000255" key="3">
    <source>
        <dbReference type="PROSITE-ProRule" id="PRU00039"/>
    </source>
</evidence>
<evidence type="ECO:0000255" key="4">
    <source>
        <dbReference type="PROSITE-ProRule" id="PRU00076"/>
    </source>
</evidence>
<evidence type="ECO:0000255" key="5">
    <source>
        <dbReference type="PROSITE-ProRule" id="PRU00122"/>
    </source>
</evidence>
<evidence type="ECO:0000269" key="6">
    <source>
    </source>
</evidence>
<evidence type="ECO:0000269" key="7">
    <source>
    </source>
</evidence>
<keyword id="KW-0217">Developmental protein</keyword>
<keyword id="KW-1015">Disulfide bond</keyword>
<keyword id="KW-0245">EGF-like domain</keyword>
<keyword id="KW-0433">Leucine-rich repeat</keyword>
<keyword id="KW-1185">Reference proteome</keyword>
<keyword id="KW-0677">Repeat</keyword>
<keyword id="KW-0964">Secreted</keyword>
<keyword id="KW-0732">Signal</keyword>
<accession>G5EFX6</accession>
<proteinExistence type="evidence at protein level"/>
<gene>
    <name type="primary">slt-1</name>
    <name type="ORF">F40E10.4</name>
</gene>
<dbReference type="EMBL" id="Z69792">
    <property type="protein sequence ID" value="CAA93668.3"/>
    <property type="molecule type" value="Genomic_DNA"/>
</dbReference>
<dbReference type="EMBL" id="AL022270">
    <property type="protein sequence ID" value="CAA93668.3"/>
    <property type="status" value="JOINED"/>
    <property type="molecule type" value="Genomic_DNA"/>
</dbReference>
<dbReference type="PIR" id="D89711">
    <property type="entry name" value="D89711"/>
</dbReference>
<dbReference type="PIR" id="T22025">
    <property type="entry name" value="T22025"/>
</dbReference>
<dbReference type="RefSeq" id="NP_510437.2">
    <property type="nucleotide sequence ID" value="NM_078036.5"/>
</dbReference>
<dbReference type="SMR" id="G5EFX6"/>
<dbReference type="BioGRID" id="46459">
    <property type="interactions" value="7"/>
</dbReference>
<dbReference type="FunCoup" id="G5EFX6">
    <property type="interactions" value="955"/>
</dbReference>
<dbReference type="STRING" id="6239.F40E10.4.1"/>
<dbReference type="PaxDb" id="6239-F40E10.4"/>
<dbReference type="EnsemblMetazoa" id="F40E10.4.1">
    <property type="protein sequence ID" value="F40E10.4.1"/>
    <property type="gene ID" value="WBGene00004854"/>
</dbReference>
<dbReference type="GeneID" id="181562"/>
<dbReference type="KEGG" id="cel:CELE_F40E10.4"/>
<dbReference type="AGR" id="WB:WBGene00004854"/>
<dbReference type="CTD" id="181562"/>
<dbReference type="WormBase" id="F40E10.4">
    <property type="protein sequence ID" value="CE32412"/>
    <property type="gene ID" value="WBGene00004854"/>
    <property type="gene designation" value="slt-1"/>
</dbReference>
<dbReference type="eggNOG" id="KOG4237">
    <property type="taxonomic scope" value="Eukaryota"/>
</dbReference>
<dbReference type="GeneTree" id="ENSGT00940000167217"/>
<dbReference type="HOGENOM" id="CLU_001431_1_0_1"/>
<dbReference type="InParanoid" id="G5EFX6"/>
<dbReference type="OMA" id="ETKCQNN"/>
<dbReference type="OrthoDB" id="283575at2759"/>
<dbReference type="PhylomeDB" id="G5EFX6"/>
<dbReference type="Reactome" id="R-CEL-376176">
    <property type="pathway name" value="Signaling by ROBO receptors"/>
</dbReference>
<dbReference type="Reactome" id="R-CEL-9010553">
    <property type="pathway name" value="Regulation of expression of SLITs and ROBOs"/>
</dbReference>
<dbReference type="PRO" id="PR:G5EFX6"/>
<dbReference type="Proteomes" id="UP000001940">
    <property type="component" value="Chromosome X"/>
</dbReference>
<dbReference type="Bgee" id="WBGene00004854">
    <property type="expression patterns" value="Expressed in pharyngeal muscle cell (C elegans) and 3 other cell types or tissues"/>
</dbReference>
<dbReference type="GO" id="GO:0005576">
    <property type="term" value="C:extracellular region"/>
    <property type="evidence" value="ECO:0000250"/>
    <property type="project" value="WormBase"/>
</dbReference>
<dbReference type="GO" id="GO:0005509">
    <property type="term" value="F:calcium ion binding"/>
    <property type="evidence" value="ECO:0007669"/>
    <property type="project" value="InterPro"/>
</dbReference>
<dbReference type="GO" id="GO:0008201">
    <property type="term" value="F:heparin binding"/>
    <property type="evidence" value="ECO:0000318"/>
    <property type="project" value="GO_Central"/>
</dbReference>
<dbReference type="GO" id="GO:0048495">
    <property type="term" value="F:Roundabout binding"/>
    <property type="evidence" value="ECO:0000318"/>
    <property type="project" value="GO_Central"/>
</dbReference>
<dbReference type="GO" id="GO:0005102">
    <property type="term" value="F:signaling receptor binding"/>
    <property type="evidence" value="ECO:0000353"/>
    <property type="project" value="WormBase"/>
</dbReference>
<dbReference type="GO" id="GO:0016199">
    <property type="term" value="P:axon midline choice point recognition"/>
    <property type="evidence" value="ECO:0000316"/>
    <property type="project" value="UniProtKB"/>
</dbReference>
<dbReference type="GO" id="GO:0033563">
    <property type="term" value="P:dorsal/ventral axon guidance"/>
    <property type="evidence" value="ECO:0000315"/>
    <property type="project" value="WormBase"/>
</dbReference>
<dbReference type="GO" id="GO:0048843">
    <property type="term" value="P:negative regulation of axon extension involved in axon guidance"/>
    <property type="evidence" value="ECO:0000316"/>
    <property type="project" value="WormBase"/>
</dbReference>
<dbReference type="GO" id="GO:0001764">
    <property type="term" value="P:neuron migration"/>
    <property type="evidence" value="ECO:0000315"/>
    <property type="project" value="WormBase"/>
</dbReference>
<dbReference type="GO" id="GO:1905489">
    <property type="term" value="P:regulation of sensory neuron axon guidance"/>
    <property type="evidence" value="ECO:0000316"/>
    <property type="project" value="UniProtKB"/>
</dbReference>
<dbReference type="GO" id="GO:0097374">
    <property type="term" value="P:sensory neuron axon guidance"/>
    <property type="evidence" value="ECO:0000315"/>
    <property type="project" value="UniProtKB"/>
</dbReference>
<dbReference type="CDD" id="cd00054">
    <property type="entry name" value="EGF_CA"/>
    <property type="match status" value="5"/>
</dbReference>
<dbReference type="CDD" id="cd00110">
    <property type="entry name" value="LamG"/>
    <property type="match status" value="1"/>
</dbReference>
<dbReference type="FunFam" id="2.10.25.10:FF:000080">
    <property type="entry name" value="Neurogenic locus notch 1"/>
    <property type="match status" value="1"/>
</dbReference>
<dbReference type="FunFam" id="3.80.10.10:FF:000928">
    <property type="entry name" value="Peroxidasin homolog"/>
    <property type="match status" value="1"/>
</dbReference>
<dbReference type="FunFam" id="2.60.120.200:FF:000134">
    <property type="entry name" value="Slit 2"/>
    <property type="match status" value="1"/>
</dbReference>
<dbReference type="FunFam" id="2.10.25.10:FF:000053">
    <property type="entry name" value="Slit guidance ligand 2"/>
    <property type="match status" value="1"/>
</dbReference>
<dbReference type="FunFam" id="2.10.25.10:FF:000063">
    <property type="entry name" value="Slit guidance ligand 2"/>
    <property type="match status" value="1"/>
</dbReference>
<dbReference type="FunFam" id="3.80.10.10:FF:000002">
    <property type="entry name" value="Slit guidance ligand 2"/>
    <property type="match status" value="1"/>
</dbReference>
<dbReference type="FunFam" id="3.80.10.10:FF:000004">
    <property type="entry name" value="Slit guidance ligand 2"/>
    <property type="match status" value="1"/>
</dbReference>
<dbReference type="FunFam" id="2.10.25.10:FF:000795">
    <property type="entry name" value="Slit homolog 1 protein"/>
    <property type="match status" value="1"/>
</dbReference>
<dbReference type="FunFam" id="2.10.25.10:FF:000851">
    <property type="entry name" value="Slit homolog 1 protein"/>
    <property type="match status" value="1"/>
</dbReference>
<dbReference type="FunFam" id="3.80.10.10:FF:001363">
    <property type="entry name" value="Slit homolog 1 protein"/>
    <property type="match status" value="1"/>
</dbReference>
<dbReference type="FunFam" id="3.80.10.10:FF:000032">
    <property type="entry name" value="Slit homolog 2 (Drosophila)"/>
    <property type="match status" value="1"/>
</dbReference>
<dbReference type="Gene3D" id="2.60.120.200">
    <property type="match status" value="1"/>
</dbReference>
<dbReference type="Gene3D" id="2.10.25.10">
    <property type="entry name" value="Laminin"/>
    <property type="match status" value="6"/>
</dbReference>
<dbReference type="Gene3D" id="3.80.10.10">
    <property type="entry name" value="Ribonuclease Inhibitor"/>
    <property type="match status" value="5"/>
</dbReference>
<dbReference type="InterPro" id="IPR013320">
    <property type="entry name" value="ConA-like_dom_sf"/>
</dbReference>
<dbReference type="InterPro" id="IPR000483">
    <property type="entry name" value="Cys-rich_flank_reg_C"/>
</dbReference>
<dbReference type="InterPro" id="IPR006207">
    <property type="entry name" value="Cys_knot_C"/>
</dbReference>
<dbReference type="InterPro" id="IPR001881">
    <property type="entry name" value="EGF-like_Ca-bd_dom"/>
</dbReference>
<dbReference type="InterPro" id="IPR013032">
    <property type="entry name" value="EGF-like_CS"/>
</dbReference>
<dbReference type="InterPro" id="IPR000742">
    <property type="entry name" value="EGF-like_dom"/>
</dbReference>
<dbReference type="InterPro" id="IPR000152">
    <property type="entry name" value="EGF-type_Asp/Asn_hydroxyl_site"/>
</dbReference>
<dbReference type="InterPro" id="IPR018097">
    <property type="entry name" value="EGF_Ca-bd_CS"/>
</dbReference>
<dbReference type="InterPro" id="IPR001791">
    <property type="entry name" value="Laminin_G"/>
</dbReference>
<dbReference type="InterPro" id="IPR001611">
    <property type="entry name" value="Leu-rich_rpt"/>
</dbReference>
<dbReference type="InterPro" id="IPR003591">
    <property type="entry name" value="Leu-rich_rpt_typical-subtyp"/>
</dbReference>
<dbReference type="InterPro" id="IPR032675">
    <property type="entry name" value="LRR_dom_sf"/>
</dbReference>
<dbReference type="InterPro" id="IPR000372">
    <property type="entry name" value="LRRNT"/>
</dbReference>
<dbReference type="InterPro" id="IPR051355">
    <property type="entry name" value="Notch/Slit_guidance"/>
</dbReference>
<dbReference type="PANTHER" id="PTHR45836:SF4">
    <property type="entry name" value="PROTEIN SLIT"/>
    <property type="match status" value="1"/>
</dbReference>
<dbReference type="PANTHER" id="PTHR45836">
    <property type="entry name" value="SLIT HOMOLOG"/>
    <property type="match status" value="1"/>
</dbReference>
<dbReference type="Pfam" id="PF00008">
    <property type="entry name" value="EGF"/>
    <property type="match status" value="3"/>
</dbReference>
<dbReference type="Pfam" id="PF12661">
    <property type="entry name" value="hEGF"/>
    <property type="match status" value="1"/>
</dbReference>
<dbReference type="Pfam" id="PF02210">
    <property type="entry name" value="Laminin_G_2"/>
    <property type="match status" value="1"/>
</dbReference>
<dbReference type="Pfam" id="PF00560">
    <property type="entry name" value="LRR_1"/>
    <property type="match status" value="1"/>
</dbReference>
<dbReference type="Pfam" id="PF13855">
    <property type="entry name" value="LRR_8"/>
    <property type="match status" value="5"/>
</dbReference>
<dbReference type="Pfam" id="PF01463">
    <property type="entry name" value="LRRCT"/>
    <property type="match status" value="1"/>
</dbReference>
<dbReference type="Pfam" id="PF01462">
    <property type="entry name" value="LRRNT"/>
    <property type="match status" value="3"/>
</dbReference>
<dbReference type="PRINTS" id="PR00010">
    <property type="entry name" value="EGFBLOOD"/>
</dbReference>
<dbReference type="PRINTS" id="PR00019">
    <property type="entry name" value="LEURICHRPT"/>
</dbReference>
<dbReference type="SMART" id="SM00041">
    <property type="entry name" value="CT"/>
    <property type="match status" value="1"/>
</dbReference>
<dbReference type="SMART" id="SM00181">
    <property type="entry name" value="EGF"/>
    <property type="match status" value="7"/>
</dbReference>
<dbReference type="SMART" id="SM00179">
    <property type="entry name" value="EGF_CA"/>
    <property type="match status" value="7"/>
</dbReference>
<dbReference type="SMART" id="SM00282">
    <property type="entry name" value="LamG"/>
    <property type="match status" value="1"/>
</dbReference>
<dbReference type="SMART" id="SM00364">
    <property type="entry name" value="LRR_BAC"/>
    <property type="match status" value="6"/>
</dbReference>
<dbReference type="SMART" id="SM00365">
    <property type="entry name" value="LRR_SD22"/>
    <property type="match status" value="11"/>
</dbReference>
<dbReference type="SMART" id="SM00369">
    <property type="entry name" value="LRR_TYP"/>
    <property type="match status" value="15"/>
</dbReference>
<dbReference type="SMART" id="SM00082">
    <property type="entry name" value="LRRCT"/>
    <property type="match status" value="4"/>
</dbReference>
<dbReference type="SMART" id="SM00013">
    <property type="entry name" value="LRRNT"/>
    <property type="match status" value="4"/>
</dbReference>
<dbReference type="SUPFAM" id="SSF49899">
    <property type="entry name" value="Concanavalin A-like lectins/glucanases"/>
    <property type="match status" value="1"/>
</dbReference>
<dbReference type="SUPFAM" id="SSF57196">
    <property type="entry name" value="EGF/Laminin"/>
    <property type="match status" value="5"/>
</dbReference>
<dbReference type="SUPFAM" id="SSF52058">
    <property type="entry name" value="L domain-like"/>
    <property type="match status" value="2"/>
</dbReference>
<dbReference type="PROSITE" id="PS00010">
    <property type="entry name" value="ASX_HYDROXYL"/>
    <property type="match status" value="2"/>
</dbReference>
<dbReference type="PROSITE" id="PS01225">
    <property type="entry name" value="CTCK_2"/>
    <property type="match status" value="1"/>
</dbReference>
<dbReference type="PROSITE" id="PS00022">
    <property type="entry name" value="EGF_1"/>
    <property type="match status" value="7"/>
</dbReference>
<dbReference type="PROSITE" id="PS01186">
    <property type="entry name" value="EGF_2"/>
    <property type="match status" value="5"/>
</dbReference>
<dbReference type="PROSITE" id="PS50026">
    <property type="entry name" value="EGF_3"/>
    <property type="match status" value="7"/>
</dbReference>
<dbReference type="PROSITE" id="PS01187">
    <property type="entry name" value="EGF_CA"/>
    <property type="match status" value="2"/>
</dbReference>
<dbReference type="PROSITE" id="PS50025">
    <property type="entry name" value="LAM_G_DOMAIN"/>
    <property type="match status" value="1"/>
</dbReference>
<dbReference type="PROSITE" id="PS51450">
    <property type="entry name" value="LRR"/>
    <property type="match status" value="20"/>
</dbReference>
<sequence length="1410" mass="158223">MLICFIFILLIPESATCPAECVCVDRTVSCVGQQLTEVPQNIPNDTIRLDLQDNEITKIGPNDFSSLMNLKALQLMDNQIVTIHNQSFSSLVFLQKLRLSRNRIRHLPDNVFQNNLKLTHLDLSENDITVVSDAQLQGPEFLEVLNLDKNHIFCLENNVISSWVSLEVLTLNGNRLTTFEEPSNARFRQLDLFNNPWNCDCRLRWMRKWLEKAEGQNKTVCATPLNLQGSSIEILQDKFMTCSGNRKRRYKKTCETAEICPLPCTCTGTTVDCRDSGLTYVPTNLPPSTTEIRLEQNQISSIPSHSFKNLKNLTRLDLSKNIITEIQPKAFLGLHNLHTLVLYGNNITDLKSDTFEGLGSLQLLLLNANQLTCIRRGTFDHVPKLSMLSLYDNDIKSISEVTFQNLTSLSTLHLAKNPLICDCNLQWLAQINLQKNIETSGARCEQPKRLRKKKFATLPPNKFKCKGSESFVSMYADSCFIDSICPTQCDCYGTTVDCNKRGLNTIPTSIPRFATQLLLSGNNISTVDLNSNIHVLENLEVLDLSNNHITFINDKSFEKLSKLRELRLNDNKLHHFSSMVLDEQSNLEILDLSGNNIQCFSSIFFNKATRIREIKVIGNDLLCDCRILPLMSWLRSNSSHSIDIPPCQQFQYSDNESDKQRCAAFPEETCSDDSNLCPPKCSCLDRVVRCSNKNLTSFPSRIPFDTTELYLDANYINEIPAHDLNRLYSLTKLDLSHNRLISLENNTFSNLTRLSTLIISYNKLRCLQPLAFNGLNALRILSLHGNDISFLPQSAFSNLTSITHIAVGSNSLYCDCNMAWFSKWIKSKFIEAGIARCEYPNTVSNQLLLTAQPYQFTCDSKVPTKLATKCDLCLNSPCKNNAICETTSSRKYTCNCTPGFYGVHCENQIDACYGSPCLNNATCKVAQAGRFNCYCNKGFEGDYCEKNIDDCVNSKCENGGKCVDLINSYRCDCPMEYEGKHCEDKLEYCTKKLNPCENNGKCIPINGSYSCMCSPGFTGNNCETNIDDCKNVECQNGGSCVDGILSYDCLCRPGYAGQYCEIPPMMDMEYQKTDACQQSACGQGECVASQNSSDFTCKCHEGFSGPSCDRQMSVGFKNPGAYLALDPLASDGTITMTLRTTSKIGILLYYGDDHFVSAELYDGRVKLVYYIGNFPASHMYSSVKVNDGLPHRISIRTSERKCFLQIDKNPVQIVENSGKSDQLITKGKEMLYIGGLPIEKSQDAKRRFHVKNSESLKGCISSITINEVPINLQQALENVNTEQSCSATVNFCAGIDCGNGKCTNNALSPKGYMCQCDSHFSGEHCDEKRIKCDKQKFRRHHIENECRSVDRIKIAECNGYCGGEQNCCTAVKKKQRKVKMICKNGTTKISTVHIIRQCQCEPTKSVLSEK</sequence>
<name>SLIT1_CAEEL</name>
<protein>
    <recommendedName>
        <fullName>Slit homolog 1 protein</fullName>
        <shortName>Slt-1</shortName>
    </recommendedName>
</protein>
<comment type="function">
    <text evidence="6">Functions as a ligand for sax-3 receptor during larval development. Acts via the sax-3/Robo receptor to direct ventral axon guidance and guidance at the midline during embryonic development.</text>
</comment>
<comment type="subunit">
    <text evidence="7">Interacts with eva-1.</text>
</comment>
<comment type="subcellular location">
    <subcellularLocation>
        <location evidence="1">Secreted</location>
    </subcellularLocation>
</comment>
<organism>
    <name type="scientific">Caenorhabditis elegans</name>
    <dbReference type="NCBI Taxonomy" id="6239"/>
    <lineage>
        <taxon>Eukaryota</taxon>
        <taxon>Metazoa</taxon>
        <taxon>Ecdysozoa</taxon>
        <taxon>Nematoda</taxon>
        <taxon>Chromadorea</taxon>
        <taxon>Rhabditida</taxon>
        <taxon>Rhabditina</taxon>
        <taxon>Rhabditomorpha</taxon>
        <taxon>Rhabditoidea</taxon>
        <taxon>Rhabditidae</taxon>
        <taxon>Peloderinae</taxon>
        <taxon>Caenorhabditis</taxon>
    </lineage>
</organism>
<feature type="signal peptide" evidence="2">
    <location>
        <begin position="1"/>
        <end position="16"/>
    </location>
</feature>
<feature type="chain" id="PRO_0000420958" description="Slit homolog 1 protein">
    <location>
        <begin position="17"/>
        <end position="1410"/>
    </location>
</feature>
<feature type="domain" description="LRRNT 1">
    <location>
        <begin position="17"/>
        <end position="43"/>
    </location>
</feature>
<feature type="repeat" description="LRR 1">
    <location>
        <begin position="22"/>
        <end position="42"/>
    </location>
</feature>
<feature type="repeat" description="LRR 2">
    <location>
        <begin position="43"/>
        <end position="66"/>
    </location>
</feature>
<feature type="repeat" description="LRR 3">
    <location>
        <begin position="67"/>
        <end position="90"/>
    </location>
</feature>
<feature type="repeat" description="LRR 4">
    <location>
        <begin position="91"/>
        <end position="114"/>
    </location>
</feature>
<feature type="repeat" description="LRR 5">
    <location>
        <begin position="116"/>
        <end position="138"/>
    </location>
</feature>
<feature type="repeat" description="LRR 6">
    <location>
        <begin position="140"/>
        <end position="162"/>
    </location>
</feature>
<feature type="repeat" description="LRR 7">
    <location>
        <begin position="163"/>
        <end position="186"/>
    </location>
</feature>
<feature type="domain" description="LRRCT 1">
    <location>
        <begin position="195"/>
        <end position="243"/>
    </location>
</feature>
<feature type="repeat" description="LRR 8">
    <location>
        <begin position="219"/>
        <end position="242"/>
    </location>
</feature>
<feature type="domain" description="LRRNT 2">
    <location>
        <begin position="259"/>
        <end position="286"/>
    </location>
</feature>
<feature type="repeat" description="LRR 9">
    <location>
        <begin position="286"/>
        <end position="309"/>
    </location>
</feature>
<feature type="repeat" description="LRR 10">
    <location>
        <begin position="310"/>
        <end position="333"/>
    </location>
</feature>
<feature type="repeat" description="LRR 11">
    <location>
        <begin position="335"/>
        <end position="357"/>
    </location>
</feature>
<feature type="repeat" description="LRR 12">
    <location>
        <begin position="358"/>
        <end position="381"/>
    </location>
</feature>
<feature type="repeat" description="LRR 13">
    <location>
        <begin position="383"/>
        <end position="405"/>
    </location>
</feature>
<feature type="repeat" description="LRR 14">
    <location>
        <begin position="407"/>
        <end position="430"/>
    </location>
</feature>
<feature type="domain" description="LRRCT 2">
    <location>
        <begin position="417"/>
        <end position="466"/>
    </location>
</feature>
<feature type="repeat" description="LRR 15">
    <location>
        <begin position="442"/>
        <end position="465"/>
    </location>
</feature>
<feature type="domain" description="LRRNT 3">
    <location>
        <begin position="484"/>
        <end position="511"/>
    </location>
</feature>
<feature type="repeat" description="LRR 16">
    <location>
        <begin position="489"/>
        <end position="510"/>
    </location>
</feature>
<feature type="repeat" description="LRR 17">
    <location>
        <begin position="511"/>
        <end position="535"/>
    </location>
</feature>
<feature type="repeat" description="LRR 18">
    <location>
        <begin position="536"/>
        <end position="559"/>
    </location>
</feature>
<feature type="repeat" description="LRR 19">
    <location>
        <begin position="561"/>
        <end position="583"/>
    </location>
</feature>
<feature type="repeat" description="LRR 20">
    <location>
        <begin position="585"/>
        <end position="607"/>
    </location>
</feature>
<feature type="domain" description="LRRCT 3">
    <location>
        <begin position="619"/>
        <end position="671"/>
    </location>
</feature>
<feature type="domain" description="LRRNT 4">
    <location>
        <begin position="677"/>
        <end position="703"/>
    </location>
</feature>
<feature type="repeat" description="LRR 21">
    <location>
        <begin position="681"/>
        <end position="703"/>
    </location>
</feature>
<feature type="repeat" description="LRR 22">
    <location>
        <begin position="704"/>
        <end position="726"/>
    </location>
</feature>
<feature type="repeat" description="LRR 23">
    <location>
        <begin position="727"/>
        <end position="750"/>
    </location>
</feature>
<feature type="repeat" description="LRR 24">
    <location>
        <begin position="752"/>
        <end position="774"/>
    </location>
</feature>
<feature type="repeat" description="LRR 25">
    <location>
        <begin position="775"/>
        <end position="798"/>
    </location>
</feature>
<feature type="repeat" description="LRR 26">
    <location>
        <begin position="800"/>
        <end position="823"/>
    </location>
</feature>
<feature type="domain" description="LRRCT 4">
    <location>
        <begin position="810"/>
        <end position="859"/>
    </location>
</feature>
<feature type="domain" description="EGF-like 1" evidence="4">
    <location>
        <begin position="871"/>
        <end position="906"/>
    </location>
</feature>
<feature type="domain" description="EGF-like 2" evidence="4">
    <location>
        <begin position="908"/>
        <end position="945"/>
    </location>
</feature>
<feature type="domain" description="EGF-like 1; calcium-binding" evidence="4">
    <location>
        <begin position="947"/>
        <end position="983"/>
    </location>
</feature>
<feature type="domain" description="EGF-like 3" evidence="4">
    <location>
        <begin position="985"/>
        <end position="1023"/>
    </location>
</feature>
<feature type="domain" description="EGF-like 2; calcium-binding" evidence="4">
    <location>
        <begin position="1025"/>
        <end position="1061"/>
    </location>
</feature>
<feature type="domain" description="EGF-like 4" evidence="4">
    <location>
        <begin position="1072"/>
        <end position="1109"/>
    </location>
</feature>
<feature type="domain" description="Laminin G-like" evidence="5">
    <location>
        <begin position="1112"/>
        <end position="1285"/>
    </location>
</feature>
<feature type="repeat" description="LRR 27">
    <location>
        <begin position="1197"/>
        <end position="1221"/>
    </location>
</feature>
<feature type="domain" description="EGF-like 5" evidence="4">
    <location>
        <begin position="1288"/>
        <end position="1326"/>
    </location>
</feature>
<feature type="domain" description="CTCK" evidence="3">
    <location>
        <begin position="1332"/>
        <end position="1406"/>
    </location>
</feature>
<feature type="disulfide bond" evidence="1">
    <location>
        <begin position="873"/>
        <end position="884"/>
    </location>
</feature>
<feature type="disulfide bond" evidence="1">
    <location>
        <begin position="878"/>
        <end position="894"/>
    </location>
</feature>
<feature type="disulfide bond" evidence="1">
    <location>
        <begin position="896"/>
        <end position="905"/>
    </location>
</feature>
<feature type="disulfide bond" evidence="1">
    <location>
        <begin position="912"/>
        <end position="923"/>
    </location>
</feature>
<feature type="disulfide bond" evidence="1">
    <location>
        <begin position="917"/>
        <end position="933"/>
    </location>
</feature>
<feature type="disulfide bond" evidence="1">
    <location>
        <begin position="935"/>
        <end position="944"/>
    </location>
</feature>
<feature type="disulfide bond" evidence="1">
    <location>
        <begin position="951"/>
        <end position="962"/>
    </location>
</feature>
<feature type="disulfide bond" evidence="1">
    <location>
        <begin position="956"/>
        <end position="971"/>
    </location>
</feature>
<feature type="disulfide bond" evidence="1">
    <location>
        <begin position="973"/>
        <end position="982"/>
    </location>
</feature>
<feature type="disulfide bond" evidence="1">
    <location>
        <begin position="989"/>
        <end position="1002"/>
    </location>
</feature>
<feature type="disulfide bond" evidence="1">
    <location>
        <begin position="996"/>
        <end position="1011"/>
    </location>
</feature>
<feature type="disulfide bond" evidence="1">
    <location>
        <begin position="1013"/>
        <end position="1022"/>
    </location>
</feature>
<feature type="disulfide bond" evidence="1">
    <location>
        <begin position="1029"/>
        <end position="1040"/>
    </location>
</feature>
<feature type="disulfide bond" evidence="1">
    <location>
        <begin position="1034"/>
        <end position="1049"/>
    </location>
</feature>
<feature type="disulfide bond" evidence="1">
    <location>
        <begin position="1051"/>
        <end position="1060"/>
    </location>
</feature>
<feature type="disulfide bond" evidence="1">
    <location>
        <begin position="1076"/>
        <end position="1086"/>
    </location>
</feature>
<feature type="disulfide bond" evidence="1">
    <location>
        <begin position="1081"/>
        <end position="1097"/>
    </location>
</feature>
<feature type="disulfide bond" evidence="1">
    <location>
        <begin position="1099"/>
        <end position="1108"/>
    </location>
</feature>
<feature type="disulfide bond" evidence="1">
    <location>
        <begin position="1259"/>
        <end position="1285"/>
    </location>
</feature>
<feature type="disulfide bond" evidence="1">
    <location>
        <begin position="1292"/>
        <end position="1302"/>
    </location>
</feature>
<feature type="disulfide bond" evidence="1">
    <location>
        <begin position="1297"/>
        <end position="1314"/>
    </location>
</feature>
<feature type="disulfide bond" evidence="1">
    <location>
        <begin position="1316"/>
        <end position="1325"/>
    </location>
</feature>
<feature type="disulfide bond" evidence="1">
    <location>
        <begin position="1332"/>
        <end position="1368"/>
    </location>
</feature>
<feature type="disulfide bond" evidence="1">
    <location>
        <begin position="1346"/>
        <end position="1382"/>
    </location>
</feature>
<feature type="disulfide bond" evidence="1">
    <location>
        <begin position="1357"/>
        <end position="1398"/>
    </location>
</feature>
<feature type="disulfide bond" evidence="1">
    <location>
        <begin position="1361"/>
        <end position="1400"/>
    </location>
</feature>
<reference key="1">
    <citation type="journal article" date="1998" name="Science">
        <title>Genome sequence of the nematode C. elegans: a platform for investigating biology.</title>
        <authorList>
            <consortium name="The C. elegans sequencing consortium"/>
        </authorList>
    </citation>
    <scope>NUCLEOTIDE SEQUENCE [LARGE SCALE GENOMIC DNA]</scope>
    <source>
        <strain>Bristol N2</strain>
    </source>
</reference>
<reference key="2">
    <citation type="journal article" date="2001" name="Neuron">
        <title>C. elegans slit acts in midline, dorsal-ventral, and anterior-posterior guidance via the SAX-3/Robo receptor.</title>
        <authorList>
            <person name="Hao J.C."/>
            <person name="Yu T.W."/>
            <person name="Fujisawa K."/>
            <person name="Culotti J.G."/>
            <person name="Gengyo-Ando K."/>
            <person name="Mitani S."/>
            <person name="Moulder G."/>
            <person name="Barstead R."/>
            <person name="Tessier-Lavigne M."/>
            <person name="Bargmann C.I."/>
        </authorList>
    </citation>
    <scope>FUNCTION</scope>
</reference>
<reference key="3">
    <citation type="journal article" date="2014" name="PLoS Genet.">
        <title>EVA-1 functions as an UNC-40 Co-receptor to enhance attraction to the MADD-4 guidance cue in Caenorhabditis elegans.</title>
        <authorList>
            <person name="Chan K.K."/>
            <person name="Seetharaman A."/>
            <person name="Bagg R."/>
            <person name="Selman G."/>
            <person name="Zhang Y."/>
            <person name="Kim J."/>
            <person name="Roy P.J."/>
        </authorList>
    </citation>
    <scope>INTERACTION WITH EVA-1</scope>
</reference>